<accession>P27604</accession>
<evidence type="ECO:0000250" key="1"/>
<evidence type="ECO:0000305" key="2"/>
<organism>
    <name type="scientific">Caenorhabditis elegans</name>
    <dbReference type="NCBI Taxonomy" id="6239"/>
    <lineage>
        <taxon>Eukaryota</taxon>
        <taxon>Metazoa</taxon>
        <taxon>Ecdysozoa</taxon>
        <taxon>Nematoda</taxon>
        <taxon>Chromadorea</taxon>
        <taxon>Rhabditida</taxon>
        <taxon>Rhabditina</taxon>
        <taxon>Rhabditomorpha</taxon>
        <taxon>Rhabditoidea</taxon>
        <taxon>Rhabditidae</taxon>
        <taxon>Peloderinae</taxon>
        <taxon>Caenorhabditis</taxon>
    </lineage>
</organism>
<gene>
    <name type="primary">ahcy-1</name>
    <name type="synonym">ahh</name>
    <name type="synonym">dpy-14</name>
    <name type="ORF">K02F2.2</name>
</gene>
<proteinExistence type="inferred from homology"/>
<comment type="function">
    <text>Adenosylhomocysteine is a competitive inhibitor of S-adenosyl-L-methionine-dependent methyl transferase reactions; therefore adenosylhomocysteinase may play a key role in the control of methylations via regulation of the intracellular concentration of adenosylhomocysteine.</text>
</comment>
<comment type="catalytic activity">
    <reaction>
        <text>S-adenosyl-L-homocysteine + H2O = L-homocysteine + adenosine</text>
        <dbReference type="Rhea" id="RHEA:21708"/>
        <dbReference type="ChEBI" id="CHEBI:15377"/>
        <dbReference type="ChEBI" id="CHEBI:16335"/>
        <dbReference type="ChEBI" id="CHEBI:57856"/>
        <dbReference type="ChEBI" id="CHEBI:58199"/>
        <dbReference type="EC" id="3.13.2.1"/>
    </reaction>
</comment>
<comment type="cofactor">
    <cofactor>
        <name>NAD(+)</name>
        <dbReference type="ChEBI" id="CHEBI:57540"/>
    </cofactor>
    <text>Binds 1 NAD(+) per subunit.</text>
</comment>
<comment type="pathway">
    <text>Amino-acid biosynthesis; L-homocysteine biosynthesis; L-homocysteine from S-adenosyl-L-homocysteine: step 1/1.</text>
</comment>
<comment type="subunit">
    <text>Homotetramer.</text>
</comment>
<comment type="similarity">
    <text evidence="2">Belongs to the adenosylhomocysteinase family.</text>
</comment>
<feature type="chain" id="PRO_0000116910" description="Adenosylhomocysteinase">
    <location>
        <begin position="1"/>
        <end position="437"/>
    </location>
</feature>
<feature type="binding site" evidence="1">
    <location>
        <position position="58"/>
    </location>
    <ligand>
        <name>substrate</name>
    </ligand>
</feature>
<feature type="binding site" evidence="1">
    <location>
        <position position="133"/>
    </location>
    <ligand>
        <name>substrate</name>
    </ligand>
</feature>
<feature type="binding site" evidence="1">
    <location>
        <position position="158"/>
    </location>
    <ligand>
        <name>substrate</name>
    </ligand>
</feature>
<feature type="binding site" evidence="1">
    <location>
        <begin position="159"/>
        <end position="161"/>
    </location>
    <ligand>
        <name>NAD(+)</name>
        <dbReference type="ChEBI" id="CHEBI:57540"/>
    </ligand>
</feature>
<feature type="binding site" evidence="1">
    <location>
        <position position="188"/>
    </location>
    <ligand>
        <name>substrate</name>
    </ligand>
</feature>
<feature type="binding site" evidence="1">
    <location>
        <position position="192"/>
    </location>
    <ligand>
        <name>substrate</name>
    </ligand>
</feature>
<feature type="binding site" evidence="1">
    <location>
        <position position="193"/>
    </location>
    <ligand>
        <name>NAD(+)</name>
        <dbReference type="ChEBI" id="CHEBI:57540"/>
    </ligand>
</feature>
<feature type="binding site" evidence="1">
    <location>
        <begin position="224"/>
        <end position="229"/>
    </location>
    <ligand>
        <name>NAD(+)</name>
        <dbReference type="ChEBI" id="CHEBI:57540"/>
    </ligand>
</feature>
<feature type="binding site" evidence="1">
    <location>
        <position position="245"/>
    </location>
    <ligand>
        <name>NAD(+)</name>
        <dbReference type="ChEBI" id="CHEBI:57540"/>
    </ligand>
</feature>
<feature type="binding site" evidence="1">
    <location>
        <begin position="301"/>
        <end position="303"/>
    </location>
    <ligand>
        <name>NAD(+)</name>
        <dbReference type="ChEBI" id="CHEBI:57540"/>
    </ligand>
</feature>
<feature type="binding site" evidence="1">
    <location>
        <position position="348"/>
    </location>
    <ligand>
        <name>NAD(+)</name>
        <dbReference type="ChEBI" id="CHEBI:57540"/>
    </ligand>
</feature>
<keyword id="KW-0378">Hydrolase</keyword>
<keyword id="KW-0520">NAD</keyword>
<keyword id="KW-0554">One-carbon metabolism</keyword>
<keyword id="KW-1185">Reference proteome</keyword>
<protein>
    <recommendedName>
        <fullName>Adenosylhomocysteinase</fullName>
        <shortName>AdoHcyase</shortName>
        <ecNumber>3.13.2.1</ecNumber>
    </recommendedName>
    <alternativeName>
        <fullName>Protein dumpy-14</fullName>
    </alternativeName>
    <alternativeName>
        <fullName>S-adenosyl-L-homocysteine hydrolase</fullName>
    </alternativeName>
</protein>
<sequence length="437" mass="47536">MAQSKPAYKVADIKLADFGRKEIILAENEMPGLMAMRSKYGPSQPLKGARIAGCLHMTIQTAVLIETLTALGAEVQWSSCNIFSTQDHAAAAIAQTGVPVYAWKGETDEEYEWCIEQTIVFKDGQPLNMILDDGGDLTNLVHAKYPQYLAGIRGLSEETTTGVHNLAKMLAKGDLKVPAINVNDSVTKSKFDNLYGIRESLPDGIKRATDVMLAGKVAVVAGYGDVGKGSAASLKAFGSRVIVTEIDPINALQAAMEGYEVTTLEEAAPKANIIVTTTGCKDIVTGKHFELLPNDAIVCNVGHFDCEIDVKWLNTNATKKDTIKPQVDRYTLKNGRHVILLAEGRLVNLGCATGHPSFVMSNSFTNQVLAQVELWTKFGTPQEYKLGLYVLPKTLDEEVAYLHLAQLGVKLTKLSDEQASYLGVPVAGPYKPDHYRY</sequence>
<dbReference type="EC" id="3.13.2.1"/>
<dbReference type="EMBL" id="M64306">
    <property type="protein sequence ID" value="AAA28062.1"/>
    <property type="molecule type" value="Genomic_DNA"/>
</dbReference>
<dbReference type="EMBL" id="S57284">
    <property type="protein sequence ID" value="AAB25906.1"/>
    <property type="molecule type" value="Genomic_DNA"/>
</dbReference>
<dbReference type="EMBL" id="FO081029">
    <property type="protein sequence ID" value="CCD68626.1"/>
    <property type="molecule type" value="Genomic_DNA"/>
</dbReference>
<dbReference type="PIR" id="T32918">
    <property type="entry name" value="T32918"/>
</dbReference>
<dbReference type="RefSeq" id="NP_491955.1">
    <property type="nucleotide sequence ID" value="NM_059554.9"/>
</dbReference>
<dbReference type="SMR" id="P27604"/>
<dbReference type="BioGRID" id="37854">
    <property type="interactions" value="52"/>
</dbReference>
<dbReference type="DIP" id="DIP-25388N"/>
<dbReference type="FunCoup" id="P27604">
    <property type="interactions" value="2156"/>
</dbReference>
<dbReference type="IntAct" id="P27604">
    <property type="interactions" value="1"/>
</dbReference>
<dbReference type="STRING" id="6239.K02F2.2.2"/>
<dbReference type="iPTMnet" id="P27604"/>
<dbReference type="PaxDb" id="6239-K02F2.2.2"/>
<dbReference type="PeptideAtlas" id="P27604"/>
<dbReference type="EnsemblMetazoa" id="K02F2.2.1">
    <property type="protein sequence ID" value="K02F2.2.1"/>
    <property type="gene ID" value="WBGene00019322"/>
</dbReference>
<dbReference type="GeneID" id="172408"/>
<dbReference type="KEGG" id="cel:CELE_K02F2.2"/>
<dbReference type="UCSC" id="K02F2.2.1">
    <property type="organism name" value="c. elegans"/>
</dbReference>
<dbReference type="AGR" id="WB:WBGene00019322"/>
<dbReference type="CTD" id="172408"/>
<dbReference type="WormBase" id="K02F2.2">
    <property type="protein sequence ID" value="CE17154"/>
    <property type="gene ID" value="WBGene00019322"/>
    <property type="gene designation" value="ahcy-1"/>
</dbReference>
<dbReference type="eggNOG" id="KOG1370">
    <property type="taxonomic scope" value="Eukaryota"/>
</dbReference>
<dbReference type="GeneTree" id="ENSGT00950000182981"/>
<dbReference type="HOGENOM" id="CLU_025194_2_1_1"/>
<dbReference type="InParanoid" id="P27604"/>
<dbReference type="OMA" id="YIGVTVE"/>
<dbReference type="OrthoDB" id="10007170at2759"/>
<dbReference type="PhylomeDB" id="P27604"/>
<dbReference type="Reactome" id="R-CEL-156581">
    <property type="pathway name" value="Methylation"/>
</dbReference>
<dbReference type="Reactome" id="R-CEL-1614635">
    <property type="pathway name" value="Sulfur amino acid metabolism"/>
</dbReference>
<dbReference type="SignaLink" id="P27604"/>
<dbReference type="UniPathway" id="UPA00314">
    <property type="reaction ID" value="UER00076"/>
</dbReference>
<dbReference type="PRO" id="PR:P27604"/>
<dbReference type="Proteomes" id="UP000001940">
    <property type="component" value="Chromosome I"/>
</dbReference>
<dbReference type="Bgee" id="WBGene00019322">
    <property type="expression patterns" value="Expressed in adult organism and 4 other cell types or tissues"/>
</dbReference>
<dbReference type="GO" id="GO:0005829">
    <property type="term" value="C:cytosol"/>
    <property type="evidence" value="ECO:0000250"/>
    <property type="project" value="WormBase"/>
</dbReference>
<dbReference type="GO" id="GO:0004013">
    <property type="term" value="F:adenosylhomocysteinase activity"/>
    <property type="evidence" value="ECO:0000250"/>
    <property type="project" value="WormBase"/>
</dbReference>
<dbReference type="GO" id="GO:0006730">
    <property type="term" value="P:one-carbon metabolic process"/>
    <property type="evidence" value="ECO:0007669"/>
    <property type="project" value="UniProtKB-KW"/>
</dbReference>
<dbReference type="GO" id="GO:0019510">
    <property type="term" value="P:S-adenosylhomocysteine catabolic process"/>
    <property type="evidence" value="ECO:0000250"/>
    <property type="project" value="WormBase"/>
</dbReference>
<dbReference type="GO" id="GO:0033353">
    <property type="term" value="P:S-adenosylmethionine cycle"/>
    <property type="evidence" value="ECO:0000318"/>
    <property type="project" value="GO_Central"/>
</dbReference>
<dbReference type="CDD" id="cd00401">
    <property type="entry name" value="SAHH"/>
    <property type="match status" value="1"/>
</dbReference>
<dbReference type="FunFam" id="3.40.50.1480:FF:000004">
    <property type="entry name" value="Adenosylhomocysteinase"/>
    <property type="match status" value="1"/>
</dbReference>
<dbReference type="FunFam" id="3.40.50.720:FF:000004">
    <property type="entry name" value="Adenosylhomocysteinase"/>
    <property type="match status" value="1"/>
</dbReference>
<dbReference type="Gene3D" id="3.40.50.1480">
    <property type="entry name" value="Adenosylhomocysteinase-like"/>
    <property type="match status" value="2"/>
</dbReference>
<dbReference type="Gene3D" id="3.40.50.720">
    <property type="entry name" value="NAD(P)-binding Rossmann-like Domain"/>
    <property type="match status" value="1"/>
</dbReference>
<dbReference type="HAMAP" id="MF_00563">
    <property type="entry name" value="AdoHcyase"/>
    <property type="match status" value="1"/>
</dbReference>
<dbReference type="InterPro" id="IPR042172">
    <property type="entry name" value="Adenosylhomocyst_ase-like_sf"/>
</dbReference>
<dbReference type="InterPro" id="IPR000043">
    <property type="entry name" value="Adenosylhomocysteinase-like"/>
</dbReference>
<dbReference type="InterPro" id="IPR015878">
    <property type="entry name" value="Ado_hCys_hydrolase_NAD-bd"/>
</dbReference>
<dbReference type="InterPro" id="IPR036291">
    <property type="entry name" value="NAD(P)-bd_dom_sf"/>
</dbReference>
<dbReference type="InterPro" id="IPR020082">
    <property type="entry name" value="S-Ado-L-homoCys_hydrolase_CS"/>
</dbReference>
<dbReference type="NCBIfam" id="TIGR00936">
    <property type="entry name" value="ahcY"/>
    <property type="match status" value="1"/>
</dbReference>
<dbReference type="NCBIfam" id="NF004005">
    <property type="entry name" value="PRK05476.2-3"/>
    <property type="match status" value="1"/>
</dbReference>
<dbReference type="PANTHER" id="PTHR23420">
    <property type="entry name" value="ADENOSYLHOMOCYSTEINASE"/>
    <property type="match status" value="1"/>
</dbReference>
<dbReference type="PANTHER" id="PTHR23420:SF0">
    <property type="entry name" value="ADENOSYLHOMOCYSTEINASE"/>
    <property type="match status" value="1"/>
</dbReference>
<dbReference type="Pfam" id="PF05221">
    <property type="entry name" value="AdoHcyase"/>
    <property type="match status" value="1"/>
</dbReference>
<dbReference type="Pfam" id="PF00670">
    <property type="entry name" value="AdoHcyase_NAD"/>
    <property type="match status" value="1"/>
</dbReference>
<dbReference type="PIRSF" id="PIRSF001109">
    <property type="entry name" value="Ad_hcy_hydrolase"/>
    <property type="match status" value="1"/>
</dbReference>
<dbReference type="SMART" id="SM00996">
    <property type="entry name" value="AdoHcyase"/>
    <property type="match status" value="1"/>
</dbReference>
<dbReference type="SMART" id="SM00997">
    <property type="entry name" value="AdoHcyase_NAD"/>
    <property type="match status" value="1"/>
</dbReference>
<dbReference type="SUPFAM" id="SSF52283">
    <property type="entry name" value="Formate/glycerate dehydrogenase catalytic domain-like"/>
    <property type="match status" value="1"/>
</dbReference>
<dbReference type="SUPFAM" id="SSF51735">
    <property type="entry name" value="NAD(P)-binding Rossmann-fold domains"/>
    <property type="match status" value="1"/>
</dbReference>
<dbReference type="PROSITE" id="PS00738">
    <property type="entry name" value="ADOHCYASE_1"/>
    <property type="match status" value="1"/>
</dbReference>
<dbReference type="PROSITE" id="PS00739">
    <property type="entry name" value="ADOHCYASE_2"/>
    <property type="match status" value="1"/>
</dbReference>
<reference key="1">
    <citation type="journal article" date="1993" name="Genome">
        <title>Molecular characterization in the dpy-14 region identifies the adenosylhomocysteine hydrolase gene in Caenorhabditis elegans.</title>
        <authorList>
            <person name="Prasad S.S."/>
            <person name="Starr T."/>
            <person name="Rose A.M."/>
        </authorList>
    </citation>
    <scope>NUCLEOTIDE SEQUENCE [GENOMIC DNA]</scope>
</reference>
<reference key="2">
    <citation type="journal article" date="1998" name="Science">
        <title>Genome sequence of the nematode C. elegans: a platform for investigating biology.</title>
        <authorList>
            <consortium name="The C. elegans sequencing consortium"/>
        </authorList>
    </citation>
    <scope>NUCLEOTIDE SEQUENCE [LARGE SCALE GENOMIC DNA]</scope>
    <source>
        <strain>Bristol N2</strain>
    </source>
</reference>
<name>SAHH_CAEEL</name>